<dbReference type="EC" id="3.5.4.16"/>
<dbReference type="EMBL" id="AL023093">
    <property type="protein sequence ID" value="CAA18795.1"/>
    <property type="molecule type" value="Genomic_DNA"/>
</dbReference>
<dbReference type="EMBL" id="AL583917">
    <property type="protein sequence ID" value="CAC29731.1"/>
    <property type="molecule type" value="Genomic_DNA"/>
</dbReference>
<dbReference type="PIR" id="G86936">
    <property type="entry name" value="G86936"/>
</dbReference>
<dbReference type="RefSeq" id="NP_301283.1">
    <property type="nucleotide sequence ID" value="NC_002677.1"/>
</dbReference>
<dbReference type="RefSeq" id="WP_010907607.1">
    <property type="nucleotide sequence ID" value="NC_002677.1"/>
</dbReference>
<dbReference type="SMR" id="O69531"/>
<dbReference type="STRING" id="272631.gene:17574040"/>
<dbReference type="KEGG" id="mle:ML0223"/>
<dbReference type="PATRIC" id="fig|272631.5.peg.355"/>
<dbReference type="Leproma" id="ML0223"/>
<dbReference type="eggNOG" id="COG0302">
    <property type="taxonomic scope" value="Bacteria"/>
</dbReference>
<dbReference type="HOGENOM" id="CLU_049768_3_3_11"/>
<dbReference type="OrthoDB" id="9801207at2"/>
<dbReference type="UniPathway" id="UPA00848">
    <property type="reaction ID" value="UER00151"/>
</dbReference>
<dbReference type="Proteomes" id="UP000000806">
    <property type="component" value="Chromosome"/>
</dbReference>
<dbReference type="GO" id="GO:0005737">
    <property type="term" value="C:cytoplasm"/>
    <property type="evidence" value="ECO:0007669"/>
    <property type="project" value="TreeGrafter"/>
</dbReference>
<dbReference type="GO" id="GO:0005525">
    <property type="term" value="F:GTP binding"/>
    <property type="evidence" value="ECO:0007669"/>
    <property type="project" value="UniProtKB-KW"/>
</dbReference>
<dbReference type="GO" id="GO:0003934">
    <property type="term" value="F:GTP cyclohydrolase I activity"/>
    <property type="evidence" value="ECO:0007669"/>
    <property type="project" value="UniProtKB-UniRule"/>
</dbReference>
<dbReference type="GO" id="GO:0008270">
    <property type="term" value="F:zinc ion binding"/>
    <property type="evidence" value="ECO:0007669"/>
    <property type="project" value="UniProtKB-UniRule"/>
</dbReference>
<dbReference type="GO" id="GO:0006730">
    <property type="term" value="P:one-carbon metabolic process"/>
    <property type="evidence" value="ECO:0007669"/>
    <property type="project" value="UniProtKB-UniRule"/>
</dbReference>
<dbReference type="GO" id="GO:0006729">
    <property type="term" value="P:tetrahydrobiopterin biosynthetic process"/>
    <property type="evidence" value="ECO:0007669"/>
    <property type="project" value="TreeGrafter"/>
</dbReference>
<dbReference type="GO" id="GO:0046654">
    <property type="term" value="P:tetrahydrofolate biosynthetic process"/>
    <property type="evidence" value="ECO:0007669"/>
    <property type="project" value="UniProtKB-UniRule"/>
</dbReference>
<dbReference type="FunFam" id="1.10.286.10:FF:000001">
    <property type="entry name" value="GTP cyclohydrolase 1"/>
    <property type="match status" value="1"/>
</dbReference>
<dbReference type="FunFam" id="3.30.1130.10:FF:000001">
    <property type="entry name" value="GTP cyclohydrolase 1"/>
    <property type="match status" value="1"/>
</dbReference>
<dbReference type="Gene3D" id="1.10.286.10">
    <property type="match status" value="1"/>
</dbReference>
<dbReference type="Gene3D" id="3.30.1130.10">
    <property type="match status" value="1"/>
</dbReference>
<dbReference type="HAMAP" id="MF_00223">
    <property type="entry name" value="FolE"/>
    <property type="match status" value="1"/>
</dbReference>
<dbReference type="InterPro" id="IPR043133">
    <property type="entry name" value="GTP-CH-I_C/QueF"/>
</dbReference>
<dbReference type="InterPro" id="IPR043134">
    <property type="entry name" value="GTP-CH-I_N"/>
</dbReference>
<dbReference type="InterPro" id="IPR001474">
    <property type="entry name" value="GTP_CycHdrlase_I"/>
</dbReference>
<dbReference type="InterPro" id="IPR018234">
    <property type="entry name" value="GTP_CycHdrlase_I_CS"/>
</dbReference>
<dbReference type="InterPro" id="IPR020602">
    <property type="entry name" value="GTP_CycHdrlase_I_dom"/>
</dbReference>
<dbReference type="NCBIfam" id="TIGR00063">
    <property type="entry name" value="folE"/>
    <property type="match status" value="1"/>
</dbReference>
<dbReference type="NCBIfam" id="NF006825">
    <property type="entry name" value="PRK09347.1-2"/>
    <property type="match status" value="1"/>
</dbReference>
<dbReference type="NCBIfam" id="NF006826">
    <property type="entry name" value="PRK09347.1-3"/>
    <property type="match status" value="1"/>
</dbReference>
<dbReference type="PANTHER" id="PTHR11109:SF7">
    <property type="entry name" value="GTP CYCLOHYDROLASE 1"/>
    <property type="match status" value="1"/>
</dbReference>
<dbReference type="PANTHER" id="PTHR11109">
    <property type="entry name" value="GTP CYCLOHYDROLASE I"/>
    <property type="match status" value="1"/>
</dbReference>
<dbReference type="Pfam" id="PF01227">
    <property type="entry name" value="GTP_cyclohydroI"/>
    <property type="match status" value="1"/>
</dbReference>
<dbReference type="SUPFAM" id="SSF55620">
    <property type="entry name" value="Tetrahydrobiopterin biosynthesis enzymes-like"/>
    <property type="match status" value="1"/>
</dbReference>
<dbReference type="PROSITE" id="PS00859">
    <property type="entry name" value="GTP_CYCLOHYDROL_1_1"/>
    <property type="match status" value="1"/>
</dbReference>
<dbReference type="PROSITE" id="PS00860">
    <property type="entry name" value="GTP_CYCLOHYDROL_1_2"/>
    <property type="match status" value="1"/>
</dbReference>
<accession>O69531</accession>
<proteinExistence type="inferred from homology"/>
<sequence length="205" mass="22531">MALLDLGLESTAVPRIRVFDQQRAEAAIRELLYAIGEDPDREGLADTPARVARACRELFSGLYTDPQTVLNTMFDEEHNELVIVKEIPMYSTCEHHLVSFHGVAHIGYLPGADGRVTGLSKIARLVDLYAKRPQVQERLTSQIADALVSKLDPRGVIIVVEAEHLCMAMRGVRKPGAITTTSAVRGQFKTDAASRAEALGLILRK</sequence>
<name>GCH1_MYCLE</name>
<keyword id="KW-0342">GTP-binding</keyword>
<keyword id="KW-0378">Hydrolase</keyword>
<keyword id="KW-0479">Metal-binding</keyword>
<keyword id="KW-0547">Nucleotide-binding</keyword>
<keyword id="KW-0554">One-carbon metabolism</keyword>
<keyword id="KW-1185">Reference proteome</keyword>
<keyword id="KW-0862">Zinc</keyword>
<comment type="catalytic activity">
    <reaction>
        <text>GTP + H2O = 7,8-dihydroneopterin 3'-triphosphate + formate + H(+)</text>
        <dbReference type="Rhea" id="RHEA:17473"/>
        <dbReference type="ChEBI" id="CHEBI:15377"/>
        <dbReference type="ChEBI" id="CHEBI:15378"/>
        <dbReference type="ChEBI" id="CHEBI:15740"/>
        <dbReference type="ChEBI" id="CHEBI:37565"/>
        <dbReference type="ChEBI" id="CHEBI:58462"/>
        <dbReference type="EC" id="3.5.4.16"/>
    </reaction>
</comment>
<comment type="pathway">
    <text>Cofactor biosynthesis; 7,8-dihydroneopterin triphosphate biosynthesis; 7,8-dihydroneopterin triphosphate from GTP: step 1/1.</text>
</comment>
<comment type="subunit">
    <text evidence="1">Toroid-shaped homodecamer, composed of two pentamers of five dimers.</text>
</comment>
<comment type="similarity">
    <text evidence="2">Belongs to the GTP cyclohydrolase I family.</text>
</comment>
<reference key="1">
    <citation type="journal article" date="2001" name="Nature">
        <title>Massive gene decay in the leprosy bacillus.</title>
        <authorList>
            <person name="Cole S.T."/>
            <person name="Eiglmeier K."/>
            <person name="Parkhill J."/>
            <person name="James K.D."/>
            <person name="Thomson N.R."/>
            <person name="Wheeler P.R."/>
            <person name="Honore N."/>
            <person name="Garnier T."/>
            <person name="Churcher C.M."/>
            <person name="Harris D.E."/>
            <person name="Mungall K.L."/>
            <person name="Basham D."/>
            <person name="Brown D."/>
            <person name="Chillingworth T."/>
            <person name="Connor R."/>
            <person name="Davies R.M."/>
            <person name="Devlin K."/>
            <person name="Duthoy S."/>
            <person name="Feltwell T."/>
            <person name="Fraser A."/>
            <person name="Hamlin N."/>
            <person name="Holroyd S."/>
            <person name="Hornsby T."/>
            <person name="Jagels K."/>
            <person name="Lacroix C."/>
            <person name="Maclean J."/>
            <person name="Moule S."/>
            <person name="Murphy L.D."/>
            <person name="Oliver K."/>
            <person name="Quail M.A."/>
            <person name="Rajandream M.A."/>
            <person name="Rutherford K.M."/>
            <person name="Rutter S."/>
            <person name="Seeger K."/>
            <person name="Simon S."/>
            <person name="Simmonds M."/>
            <person name="Skelton J."/>
            <person name="Squares R."/>
            <person name="Squares S."/>
            <person name="Stevens K."/>
            <person name="Taylor K."/>
            <person name="Whitehead S."/>
            <person name="Woodward J.R."/>
            <person name="Barrell B.G."/>
        </authorList>
    </citation>
    <scope>NUCLEOTIDE SEQUENCE [LARGE SCALE GENOMIC DNA]</scope>
    <source>
        <strain>TN</strain>
    </source>
</reference>
<feature type="chain" id="PRO_0000119422" description="GTP cyclohydrolase 1">
    <location>
        <begin position="1"/>
        <end position="205"/>
    </location>
</feature>
<feature type="binding site" evidence="1">
    <location>
        <position position="93"/>
    </location>
    <ligand>
        <name>Zn(2+)</name>
        <dbReference type="ChEBI" id="CHEBI:29105"/>
    </ligand>
</feature>
<feature type="binding site" evidence="1">
    <location>
        <position position="96"/>
    </location>
    <ligand>
        <name>Zn(2+)</name>
        <dbReference type="ChEBI" id="CHEBI:29105"/>
    </ligand>
</feature>
<feature type="binding site" evidence="1">
    <location>
        <position position="166"/>
    </location>
    <ligand>
        <name>Zn(2+)</name>
        <dbReference type="ChEBI" id="CHEBI:29105"/>
    </ligand>
</feature>
<protein>
    <recommendedName>
        <fullName>GTP cyclohydrolase 1</fullName>
        <ecNumber>3.5.4.16</ecNumber>
    </recommendedName>
    <alternativeName>
        <fullName>GTP cyclohydrolase I</fullName>
        <shortName>GTP-CH-I</shortName>
    </alternativeName>
</protein>
<organism>
    <name type="scientific">Mycobacterium leprae (strain TN)</name>
    <dbReference type="NCBI Taxonomy" id="272631"/>
    <lineage>
        <taxon>Bacteria</taxon>
        <taxon>Bacillati</taxon>
        <taxon>Actinomycetota</taxon>
        <taxon>Actinomycetes</taxon>
        <taxon>Mycobacteriales</taxon>
        <taxon>Mycobacteriaceae</taxon>
        <taxon>Mycobacterium</taxon>
    </lineage>
</organism>
<evidence type="ECO:0000250" key="1"/>
<evidence type="ECO:0000305" key="2"/>
<gene>
    <name type="primary">folE</name>
    <name type="ordered locus">ML0223</name>
    <name type="ORF">MLCB2548.08c</name>
</gene>